<proteinExistence type="inferred from homology"/>
<evidence type="ECO:0000255" key="1">
    <source>
        <dbReference type="HAMAP-Rule" id="MF_01345"/>
    </source>
</evidence>
<evidence type="ECO:0000305" key="2"/>
<name>RS17_PSEE4</name>
<feature type="chain" id="PRO_1000055000" description="Small ribosomal subunit protein uS17">
    <location>
        <begin position="1"/>
        <end position="88"/>
    </location>
</feature>
<comment type="function">
    <text evidence="1">One of the primary rRNA binding proteins, it binds specifically to the 5'-end of 16S ribosomal RNA.</text>
</comment>
<comment type="subunit">
    <text evidence="1">Part of the 30S ribosomal subunit.</text>
</comment>
<comment type="similarity">
    <text evidence="1">Belongs to the universal ribosomal protein uS17 family.</text>
</comment>
<organism>
    <name type="scientific">Pseudomonas entomophila (strain L48)</name>
    <dbReference type="NCBI Taxonomy" id="384676"/>
    <lineage>
        <taxon>Bacteria</taxon>
        <taxon>Pseudomonadati</taxon>
        <taxon>Pseudomonadota</taxon>
        <taxon>Gammaproteobacteria</taxon>
        <taxon>Pseudomonadales</taxon>
        <taxon>Pseudomonadaceae</taxon>
        <taxon>Pseudomonas</taxon>
    </lineage>
</organism>
<gene>
    <name evidence="1" type="primary">rpsQ</name>
    <name type="ordered locus">PSEEN0499</name>
</gene>
<protein>
    <recommendedName>
        <fullName evidence="1">Small ribosomal subunit protein uS17</fullName>
    </recommendedName>
    <alternativeName>
        <fullName evidence="2">30S ribosomal protein S17</fullName>
    </alternativeName>
</protein>
<reference key="1">
    <citation type="journal article" date="2006" name="Nat. Biotechnol.">
        <title>Complete genome sequence of the entomopathogenic and metabolically versatile soil bacterium Pseudomonas entomophila.</title>
        <authorList>
            <person name="Vodovar N."/>
            <person name="Vallenet D."/>
            <person name="Cruveiller S."/>
            <person name="Rouy Z."/>
            <person name="Barbe V."/>
            <person name="Acosta C."/>
            <person name="Cattolico L."/>
            <person name="Jubin C."/>
            <person name="Lajus A."/>
            <person name="Segurens B."/>
            <person name="Vacherie B."/>
            <person name="Wincker P."/>
            <person name="Weissenbach J."/>
            <person name="Lemaitre B."/>
            <person name="Medigue C."/>
            <person name="Boccard F."/>
        </authorList>
    </citation>
    <scope>NUCLEOTIDE SEQUENCE [LARGE SCALE GENOMIC DNA]</scope>
    <source>
        <strain>L48</strain>
    </source>
</reference>
<sequence length="88" mass="10074">MAEAEKTVRTLTGRVVSDKMDKTITVLIERRVKHPIYGKYVKRSTKLHAHDESNQCKIGDKVSIRETRPLAKTKSWALVEVLERAVEV</sequence>
<dbReference type="EMBL" id="CT573326">
    <property type="protein sequence ID" value="CAK13445.1"/>
    <property type="molecule type" value="Genomic_DNA"/>
</dbReference>
<dbReference type="RefSeq" id="WP_008089812.1">
    <property type="nucleotide sequence ID" value="NC_008027.1"/>
</dbReference>
<dbReference type="SMR" id="Q1IFV7"/>
<dbReference type="STRING" id="384676.PSEEN0499"/>
<dbReference type="GeneID" id="49614407"/>
<dbReference type="KEGG" id="pen:PSEEN0499"/>
<dbReference type="eggNOG" id="COG0186">
    <property type="taxonomic scope" value="Bacteria"/>
</dbReference>
<dbReference type="HOGENOM" id="CLU_073626_1_1_6"/>
<dbReference type="OrthoDB" id="9811714at2"/>
<dbReference type="Proteomes" id="UP000000658">
    <property type="component" value="Chromosome"/>
</dbReference>
<dbReference type="GO" id="GO:0022627">
    <property type="term" value="C:cytosolic small ribosomal subunit"/>
    <property type="evidence" value="ECO:0007669"/>
    <property type="project" value="TreeGrafter"/>
</dbReference>
<dbReference type="GO" id="GO:0019843">
    <property type="term" value="F:rRNA binding"/>
    <property type="evidence" value="ECO:0007669"/>
    <property type="project" value="UniProtKB-UniRule"/>
</dbReference>
<dbReference type="GO" id="GO:0003735">
    <property type="term" value="F:structural constituent of ribosome"/>
    <property type="evidence" value="ECO:0007669"/>
    <property type="project" value="InterPro"/>
</dbReference>
<dbReference type="GO" id="GO:0006412">
    <property type="term" value="P:translation"/>
    <property type="evidence" value="ECO:0007669"/>
    <property type="project" value="UniProtKB-UniRule"/>
</dbReference>
<dbReference type="CDD" id="cd00364">
    <property type="entry name" value="Ribosomal_uS17"/>
    <property type="match status" value="1"/>
</dbReference>
<dbReference type="FunFam" id="2.40.50.140:FF:000014">
    <property type="entry name" value="30S ribosomal protein S17"/>
    <property type="match status" value="1"/>
</dbReference>
<dbReference type="Gene3D" id="2.40.50.140">
    <property type="entry name" value="Nucleic acid-binding proteins"/>
    <property type="match status" value="1"/>
</dbReference>
<dbReference type="HAMAP" id="MF_01345_B">
    <property type="entry name" value="Ribosomal_uS17_B"/>
    <property type="match status" value="1"/>
</dbReference>
<dbReference type="InterPro" id="IPR012340">
    <property type="entry name" value="NA-bd_OB-fold"/>
</dbReference>
<dbReference type="InterPro" id="IPR000266">
    <property type="entry name" value="Ribosomal_uS17"/>
</dbReference>
<dbReference type="InterPro" id="IPR019984">
    <property type="entry name" value="Ribosomal_uS17_bact/chlr"/>
</dbReference>
<dbReference type="NCBIfam" id="NF004123">
    <property type="entry name" value="PRK05610.1"/>
    <property type="match status" value="1"/>
</dbReference>
<dbReference type="NCBIfam" id="TIGR03635">
    <property type="entry name" value="uS17_bact"/>
    <property type="match status" value="1"/>
</dbReference>
<dbReference type="PANTHER" id="PTHR10744">
    <property type="entry name" value="40S RIBOSOMAL PROTEIN S11 FAMILY MEMBER"/>
    <property type="match status" value="1"/>
</dbReference>
<dbReference type="PANTHER" id="PTHR10744:SF1">
    <property type="entry name" value="SMALL RIBOSOMAL SUBUNIT PROTEIN US17M"/>
    <property type="match status" value="1"/>
</dbReference>
<dbReference type="Pfam" id="PF00366">
    <property type="entry name" value="Ribosomal_S17"/>
    <property type="match status" value="1"/>
</dbReference>
<dbReference type="PRINTS" id="PR00973">
    <property type="entry name" value="RIBOSOMALS17"/>
</dbReference>
<dbReference type="SUPFAM" id="SSF50249">
    <property type="entry name" value="Nucleic acid-binding proteins"/>
    <property type="match status" value="1"/>
</dbReference>
<accession>Q1IFV7</accession>
<keyword id="KW-0687">Ribonucleoprotein</keyword>
<keyword id="KW-0689">Ribosomal protein</keyword>
<keyword id="KW-0694">RNA-binding</keyword>
<keyword id="KW-0699">rRNA-binding</keyword>